<accession>O14427</accession>
<proteinExistence type="inferred from homology"/>
<keyword id="KW-0067">ATP-binding</keyword>
<keyword id="KW-0418">Kinase</keyword>
<keyword id="KW-0547">Nucleotide-binding</keyword>
<keyword id="KW-0723">Serine/threonine-protein kinase</keyword>
<keyword id="KW-0808">Transferase</keyword>
<keyword id="KW-0843">Virulence</keyword>
<reference key="1">
    <citation type="journal article" date="1997" name="Curr. Biol.">
        <title>Virulence and hyphal formation of Candida albicans require the Ste20p-like protein kinase CaCla4p.</title>
        <authorList>
            <person name="Leberer E."/>
            <person name="Ziegelbauer K."/>
            <person name="Schmidt A."/>
            <person name="Harcus D."/>
            <person name="Dignard D."/>
            <person name="Ash J."/>
            <person name="Johnson L."/>
            <person name="Thomas D.Y."/>
        </authorList>
    </citation>
    <scope>NUCLEOTIDE SEQUENCE [GENOMIC DNA]</scope>
</reference>
<evidence type="ECO:0000255" key="1">
    <source>
        <dbReference type="PROSITE-ProRule" id="PRU00057"/>
    </source>
</evidence>
<evidence type="ECO:0000255" key="2">
    <source>
        <dbReference type="PROSITE-ProRule" id="PRU00145"/>
    </source>
</evidence>
<evidence type="ECO:0000255" key="3">
    <source>
        <dbReference type="PROSITE-ProRule" id="PRU00159"/>
    </source>
</evidence>
<evidence type="ECO:0000255" key="4">
    <source>
        <dbReference type="PROSITE-ProRule" id="PRU10027"/>
    </source>
</evidence>
<evidence type="ECO:0000256" key="5">
    <source>
        <dbReference type="SAM" id="MobiDB-lite"/>
    </source>
</evidence>
<evidence type="ECO:0000305" key="6"/>
<organism>
    <name type="scientific">Candida albicans</name>
    <name type="common">Yeast</name>
    <dbReference type="NCBI Taxonomy" id="5476"/>
    <lineage>
        <taxon>Eukaryota</taxon>
        <taxon>Fungi</taxon>
        <taxon>Dikarya</taxon>
        <taxon>Ascomycota</taxon>
        <taxon>Saccharomycotina</taxon>
        <taxon>Pichiomycetes</taxon>
        <taxon>Debaryomycetaceae</taxon>
        <taxon>Candida/Lodderomyces clade</taxon>
        <taxon>Candida</taxon>
    </lineage>
</organism>
<sequence>MTSIYTSDLKNHRRAPPPPNGAAGSGSGSGSGSGSGSGSLANIVTSSNSLGVTANQTKPIQLNINSSKRQSGWVHVKDDGIFTSFRWNKRFMVINDKTLNFYKQEPYSSDGNSNSNTPDLSFPLYLINNINLKPNSGYSKTSQSFEIVPKNNNKSILISVKTNNDYLDWLDAFTTKCPLVQIGENNSGVSSSHPHLQIQHLTNGSLNGNSSSSPTSGLLSSSVLTGGNSGVSGPINFTHKVHVGFDPASGNFTGLPDTWKSLLQHSKITNEDWKKDPVAVIEVLEFYSDINGGNSAAGTPIGSPMINSKTNNNNNDPNNYSSTKNNVQEANLQEWVKPPAKSTVSQFKPSRAAPKPPTPYHLTQLNGSSHQHTSSSGSLPSSGNNNNNNSTNNNNTKNVSPLNNLMNKSELIPARRAPPPPTSGTSSDTYSNKNHQDRSGYEQQRQQRTDSSQQQQQQKQHQYQQKSQQQQQQPQQPLSSHQGGTSHIPKQVPPTLPSSGPPTQAASGKSMPSKIHPDLKIQQGTNNYIKSSGTDANQVDGDAKQFIKPFNLQSKKSQQQLASKQPSPPSSQQQQQKPMTSHGLMGTSHSVTKPLNPVNDPIKPLNLKSSKSKEALNETSGVSKTPSPTDKSNKPTAPASGPAVTKTAKQLKKERERLNDLQIIAKLKTVVNNQDPKPLFRIVEKAGQGASGNVYLAEMIKDNNRKIAIKQMDLDAQPRKELIINEILVMKDSQHKNIVNFLDSYLIGDNELWVIMEYMQGGSLTEIIENNDFKLNEKQIATICFETLKGLQHLHKKHIIHRDIKSDNVLLDAYGNVKITDFGFCAKLTDQRNKRATMVGTPYWMAPEVVKQKEYDEKVDVWSLGIMTIEMIEGEPPYLNEEPLKALYLIATNGTPKLKKPELLSNSIKKFLSICLCVDVRYRASTDELLEHSFIQHKSGKIEELAPLLEWKKQQQKHQQHKQETSDTGFA</sequence>
<dbReference type="EC" id="2.7.11.1"/>
<dbReference type="EMBL" id="U87996">
    <property type="protein sequence ID" value="AAB68613.1"/>
    <property type="molecule type" value="Genomic_DNA"/>
</dbReference>
<dbReference type="SMR" id="O14427"/>
<dbReference type="VEuPathDB" id="FungiDB:C1_10210C_A"/>
<dbReference type="VEuPathDB" id="FungiDB:CAWG_00412"/>
<dbReference type="BRENDA" id="2.7.11.1">
    <property type="organism ID" value="1096"/>
</dbReference>
<dbReference type="PHI-base" id="PHI:85"/>
<dbReference type="GO" id="GO:0005524">
    <property type="term" value="F:ATP binding"/>
    <property type="evidence" value="ECO:0007669"/>
    <property type="project" value="UniProtKB-KW"/>
</dbReference>
<dbReference type="GO" id="GO:0106310">
    <property type="term" value="F:protein serine kinase activity"/>
    <property type="evidence" value="ECO:0007669"/>
    <property type="project" value="RHEA"/>
</dbReference>
<dbReference type="GO" id="GO:0004674">
    <property type="term" value="F:protein serine/threonine kinase activity"/>
    <property type="evidence" value="ECO:0007669"/>
    <property type="project" value="UniProtKB-KW"/>
</dbReference>
<dbReference type="CDD" id="cd01093">
    <property type="entry name" value="CRIB_PAK_like"/>
    <property type="match status" value="1"/>
</dbReference>
<dbReference type="CDD" id="cd13279">
    <property type="entry name" value="PH_Cla4_Ste20"/>
    <property type="match status" value="1"/>
</dbReference>
<dbReference type="CDD" id="cd06614">
    <property type="entry name" value="STKc_PAK"/>
    <property type="match status" value="1"/>
</dbReference>
<dbReference type="FunFam" id="1.10.510.10:FF:000139">
    <property type="entry name" value="Non-specific serine/threonine protein kinase"/>
    <property type="match status" value="1"/>
</dbReference>
<dbReference type="FunFam" id="3.30.200.20:FF:000761">
    <property type="entry name" value="Non-specific serine/threonine protein kinase"/>
    <property type="match status" value="1"/>
</dbReference>
<dbReference type="FunFam" id="3.90.810.10:FF:000005">
    <property type="entry name" value="Non-specific serine/threonine protein kinase"/>
    <property type="match status" value="1"/>
</dbReference>
<dbReference type="Gene3D" id="3.90.810.10">
    <property type="entry name" value="CRIB domain"/>
    <property type="match status" value="1"/>
</dbReference>
<dbReference type="Gene3D" id="3.30.200.20">
    <property type="entry name" value="Phosphorylase Kinase, domain 1"/>
    <property type="match status" value="1"/>
</dbReference>
<dbReference type="Gene3D" id="2.30.29.30">
    <property type="entry name" value="Pleckstrin-homology domain (PH domain)/Phosphotyrosine-binding domain (PTB)"/>
    <property type="match status" value="1"/>
</dbReference>
<dbReference type="Gene3D" id="1.10.510.10">
    <property type="entry name" value="Transferase(Phosphotransferase) domain 1"/>
    <property type="match status" value="1"/>
</dbReference>
<dbReference type="InterPro" id="IPR000095">
    <property type="entry name" value="CRIB_dom"/>
</dbReference>
<dbReference type="InterPro" id="IPR036936">
    <property type="entry name" value="CRIB_dom_sf"/>
</dbReference>
<dbReference type="InterPro" id="IPR011009">
    <property type="entry name" value="Kinase-like_dom_sf"/>
</dbReference>
<dbReference type="InterPro" id="IPR051931">
    <property type="entry name" value="PAK3-like"/>
</dbReference>
<dbReference type="InterPro" id="IPR033923">
    <property type="entry name" value="PAK_BD"/>
</dbReference>
<dbReference type="InterPro" id="IPR011993">
    <property type="entry name" value="PH-like_dom_sf"/>
</dbReference>
<dbReference type="InterPro" id="IPR001849">
    <property type="entry name" value="PH_domain"/>
</dbReference>
<dbReference type="InterPro" id="IPR000719">
    <property type="entry name" value="Prot_kinase_dom"/>
</dbReference>
<dbReference type="InterPro" id="IPR008271">
    <property type="entry name" value="Ser/Thr_kinase_AS"/>
</dbReference>
<dbReference type="PANTHER" id="PTHR45832">
    <property type="entry name" value="SERINE/THREONINE-PROTEIN KINASE SAMKA-RELATED-RELATED"/>
    <property type="match status" value="1"/>
</dbReference>
<dbReference type="PANTHER" id="PTHR45832:SF22">
    <property type="entry name" value="SERINE_THREONINE-PROTEIN KINASE SAMKA-RELATED"/>
    <property type="match status" value="1"/>
</dbReference>
<dbReference type="Pfam" id="PF00786">
    <property type="entry name" value="PBD"/>
    <property type="match status" value="1"/>
</dbReference>
<dbReference type="Pfam" id="PF00169">
    <property type="entry name" value="PH"/>
    <property type="match status" value="1"/>
</dbReference>
<dbReference type="Pfam" id="PF00069">
    <property type="entry name" value="Pkinase"/>
    <property type="match status" value="1"/>
</dbReference>
<dbReference type="SMART" id="SM00285">
    <property type="entry name" value="PBD"/>
    <property type="match status" value="1"/>
</dbReference>
<dbReference type="SMART" id="SM00233">
    <property type="entry name" value="PH"/>
    <property type="match status" value="1"/>
</dbReference>
<dbReference type="SMART" id="SM00220">
    <property type="entry name" value="S_TKc"/>
    <property type="match status" value="1"/>
</dbReference>
<dbReference type="SUPFAM" id="SSF50729">
    <property type="entry name" value="PH domain-like"/>
    <property type="match status" value="1"/>
</dbReference>
<dbReference type="SUPFAM" id="SSF56112">
    <property type="entry name" value="Protein kinase-like (PK-like)"/>
    <property type="match status" value="1"/>
</dbReference>
<dbReference type="PROSITE" id="PS50108">
    <property type="entry name" value="CRIB"/>
    <property type="match status" value="1"/>
</dbReference>
<dbReference type="PROSITE" id="PS50003">
    <property type="entry name" value="PH_DOMAIN"/>
    <property type="match status" value="1"/>
</dbReference>
<dbReference type="PROSITE" id="PS50011">
    <property type="entry name" value="PROTEIN_KINASE_DOM"/>
    <property type="match status" value="1"/>
</dbReference>
<dbReference type="PROSITE" id="PS00108">
    <property type="entry name" value="PROTEIN_KINASE_ST"/>
    <property type="match status" value="1"/>
</dbReference>
<feature type="chain" id="PRO_0000085864" description="Serine/threonine-protein kinase CLA4">
    <location>
        <begin position="1"/>
        <end position="971"/>
    </location>
</feature>
<feature type="domain" description="PH" evidence="2">
    <location>
        <begin position="67"/>
        <end position="178"/>
    </location>
</feature>
<feature type="domain" description="CRIB" evidence="1">
    <location>
        <begin position="231"/>
        <end position="244"/>
    </location>
</feature>
<feature type="domain" description="Protein kinase" evidence="3">
    <location>
        <begin position="680"/>
        <end position="935"/>
    </location>
</feature>
<feature type="region of interest" description="Disordered" evidence="5">
    <location>
        <begin position="1"/>
        <end position="40"/>
    </location>
</feature>
<feature type="region of interest" description="Disordered" evidence="5">
    <location>
        <begin position="201"/>
        <end position="221"/>
    </location>
</feature>
<feature type="region of interest" description="Disordered" evidence="5">
    <location>
        <begin position="292"/>
        <end position="517"/>
    </location>
</feature>
<feature type="region of interest" description="Disordered" evidence="5">
    <location>
        <begin position="554"/>
        <end position="653"/>
    </location>
</feature>
<feature type="compositionally biased region" description="Gly residues" evidence="5">
    <location>
        <begin position="23"/>
        <end position="37"/>
    </location>
</feature>
<feature type="compositionally biased region" description="Low complexity" evidence="5">
    <location>
        <begin position="307"/>
        <end position="326"/>
    </location>
</feature>
<feature type="compositionally biased region" description="Low complexity" evidence="5">
    <location>
        <begin position="365"/>
        <end position="404"/>
    </location>
</feature>
<feature type="compositionally biased region" description="Polar residues" evidence="5">
    <location>
        <begin position="423"/>
        <end position="433"/>
    </location>
</feature>
<feature type="compositionally biased region" description="Basic and acidic residues" evidence="5">
    <location>
        <begin position="434"/>
        <end position="448"/>
    </location>
</feature>
<feature type="compositionally biased region" description="Low complexity" evidence="5">
    <location>
        <begin position="449"/>
        <end position="482"/>
    </location>
</feature>
<feature type="compositionally biased region" description="Pro residues" evidence="5">
    <location>
        <begin position="491"/>
        <end position="500"/>
    </location>
</feature>
<feature type="compositionally biased region" description="Low complexity" evidence="5">
    <location>
        <begin position="554"/>
        <end position="578"/>
    </location>
</feature>
<feature type="compositionally biased region" description="Polar residues" evidence="5">
    <location>
        <begin position="617"/>
        <end position="630"/>
    </location>
</feature>
<feature type="active site" description="Proton acceptor" evidence="3 4">
    <location>
        <position position="803"/>
    </location>
</feature>
<feature type="binding site" evidence="3">
    <location>
        <begin position="686"/>
        <end position="694"/>
    </location>
    <ligand>
        <name>ATP</name>
        <dbReference type="ChEBI" id="CHEBI:30616"/>
    </ligand>
</feature>
<feature type="binding site" evidence="3">
    <location>
        <position position="710"/>
    </location>
    <ligand>
        <name>ATP</name>
        <dbReference type="ChEBI" id="CHEBI:30616"/>
    </ligand>
</feature>
<gene>
    <name type="primary">CLA4</name>
</gene>
<protein>
    <recommendedName>
        <fullName>Serine/threonine-protein kinase CLA4</fullName>
        <ecNumber>2.7.11.1</ecNumber>
    </recommendedName>
</protein>
<name>CLA4_CANAX</name>
<comment type="function">
    <text>Essential for virulence and morphological switching (hyphal formation) of C.albicans.</text>
</comment>
<comment type="catalytic activity">
    <reaction>
        <text>L-seryl-[protein] + ATP = O-phospho-L-seryl-[protein] + ADP + H(+)</text>
        <dbReference type="Rhea" id="RHEA:17989"/>
        <dbReference type="Rhea" id="RHEA-COMP:9863"/>
        <dbReference type="Rhea" id="RHEA-COMP:11604"/>
        <dbReference type="ChEBI" id="CHEBI:15378"/>
        <dbReference type="ChEBI" id="CHEBI:29999"/>
        <dbReference type="ChEBI" id="CHEBI:30616"/>
        <dbReference type="ChEBI" id="CHEBI:83421"/>
        <dbReference type="ChEBI" id="CHEBI:456216"/>
        <dbReference type="EC" id="2.7.11.1"/>
    </reaction>
</comment>
<comment type="catalytic activity">
    <reaction>
        <text>L-threonyl-[protein] + ATP = O-phospho-L-threonyl-[protein] + ADP + H(+)</text>
        <dbReference type="Rhea" id="RHEA:46608"/>
        <dbReference type="Rhea" id="RHEA-COMP:11060"/>
        <dbReference type="Rhea" id="RHEA-COMP:11605"/>
        <dbReference type="ChEBI" id="CHEBI:15378"/>
        <dbReference type="ChEBI" id="CHEBI:30013"/>
        <dbReference type="ChEBI" id="CHEBI:30616"/>
        <dbReference type="ChEBI" id="CHEBI:61977"/>
        <dbReference type="ChEBI" id="CHEBI:456216"/>
        <dbReference type="EC" id="2.7.11.1"/>
    </reaction>
</comment>
<comment type="similarity">
    <text evidence="6">Belongs to the protein kinase superfamily. STE Ser/Thr protein kinase family. STE20 subfamily.</text>
</comment>